<keyword id="KW-0028">Amino-acid biosynthesis</keyword>
<keyword id="KW-0220">Diaminopimelate biosynthesis</keyword>
<keyword id="KW-0457">Lysine biosynthesis</keyword>
<keyword id="KW-0486">Methionine biosynthesis</keyword>
<keyword id="KW-0521">NADP</keyword>
<keyword id="KW-0560">Oxidoreductase</keyword>
<keyword id="KW-0791">Threonine biosynthesis</keyword>
<evidence type="ECO:0000250" key="1"/>
<evidence type="ECO:0000255" key="2">
    <source>
        <dbReference type="HAMAP-Rule" id="MF_02121"/>
    </source>
</evidence>
<dbReference type="EC" id="1.2.1.11" evidence="2"/>
<dbReference type="EMBL" id="AL513382">
    <property type="protein sequence ID" value="CAD08089.1"/>
    <property type="molecule type" value="Genomic_DNA"/>
</dbReference>
<dbReference type="EMBL" id="AE014613">
    <property type="protein sequence ID" value="AAO71451.1"/>
    <property type="molecule type" value="Genomic_DNA"/>
</dbReference>
<dbReference type="RefSeq" id="NP_458379.1">
    <property type="nucleotide sequence ID" value="NC_003198.1"/>
</dbReference>
<dbReference type="RefSeq" id="WP_000799940.1">
    <property type="nucleotide sequence ID" value="NZ_WSUR01000001.1"/>
</dbReference>
<dbReference type="SMR" id="P0A1F9"/>
<dbReference type="STRING" id="220341.gene:17588102"/>
<dbReference type="KEGG" id="stt:t3981"/>
<dbReference type="KEGG" id="sty:STY4271"/>
<dbReference type="PATRIC" id="fig|220341.7.peg.4364"/>
<dbReference type="eggNOG" id="COG0136">
    <property type="taxonomic scope" value="Bacteria"/>
</dbReference>
<dbReference type="HOGENOM" id="CLU_066397_0_0_6"/>
<dbReference type="OMA" id="FVCGDNL"/>
<dbReference type="OrthoDB" id="9022717at2"/>
<dbReference type="UniPathway" id="UPA00034">
    <property type="reaction ID" value="UER00016"/>
</dbReference>
<dbReference type="UniPathway" id="UPA00050">
    <property type="reaction ID" value="UER00463"/>
</dbReference>
<dbReference type="UniPathway" id="UPA00051">
    <property type="reaction ID" value="UER00464"/>
</dbReference>
<dbReference type="Proteomes" id="UP000000541">
    <property type="component" value="Chromosome"/>
</dbReference>
<dbReference type="Proteomes" id="UP000002670">
    <property type="component" value="Chromosome"/>
</dbReference>
<dbReference type="GO" id="GO:0004073">
    <property type="term" value="F:aspartate-semialdehyde dehydrogenase activity"/>
    <property type="evidence" value="ECO:0007669"/>
    <property type="project" value="UniProtKB-UniRule"/>
</dbReference>
<dbReference type="GO" id="GO:0051287">
    <property type="term" value="F:NAD binding"/>
    <property type="evidence" value="ECO:0007669"/>
    <property type="project" value="InterPro"/>
</dbReference>
<dbReference type="GO" id="GO:0050661">
    <property type="term" value="F:NADP binding"/>
    <property type="evidence" value="ECO:0007669"/>
    <property type="project" value="UniProtKB-UniRule"/>
</dbReference>
<dbReference type="GO" id="GO:0046983">
    <property type="term" value="F:protein dimerization activity"/>
    <property type="evidence" value="ECO:0007669"/>
    <property type="project" value="InterPro"/>
</dbReference>
<dbReference type="GO" id="GO:0071266">
    <property type="term" value="P:'de novo' L-methionine biosynthetic process"/>
    <property type="evidence" value="ECO:0007669"/>
    <property type="project" value="UniProtKB-UniRule"/>
</dbReference>
<dbReference type="GO" id="GO:0019877">
    <property type="term" value="P:diaminopimelate biosynthetic process"/>
    <property type="evidence" value="ECO:0007669"/>
    <property type="project" value="UniProtKB-UniRule"/>
</dbReference>
<dbReference type="GO" id="GO:0009097">
    <property type="term" value="P:isoleucine biosynthetic process"/>
    <property type="evidence" value="ECO:0007669"/>
    <property type="project" value="InterPro"/>
</dbReference>
<dbReference type="GO" id="GO:0009089">
    <property type="term" value="P:lysine biosynthetic process via diaminopimelate"/>
    <property type="evidence" value="ECO:0007669"/>
    <property type="project" value="UniProtKB-UniRule"/>
</dbReference>
<dbReference type="GO" id="GO:0009088">
    <property type="term" value="P:threonine biosynthetic process"/>
    <property type="evidence" value="ECO:0007669"/>
    <property type="project" value="UniProtKB-UniRule"/>
</dbReference>
<dbReference type="CDD" id="cd23938">
    <property type="entry name" value="ASADH_C_bac_like"/>
    <property type="match status" value="1"/>
</dbReference>
<dbReference type="CDD" id="cd02314">
    <property type="entry name" value="VcASADH1_like_N"/>
    <property type="match status" value="1"/>
</dbReference>
<dbReference type="FunFam" id="3.30.360.10:FF:000012">
    <property type="entry name" value="Aspartate-semialdehyde dehydrogenase"/>
    <property type="match status" value="1"/>
</dbReference>
<dbReference type="FunFam" id="3.40.50.720:FF:000152">
    <property type="entry name" value="Aspartate-semialdehyde dehydrogenase"/>
    <property type="match status" value="1"/>
</dbReference>
<dbReference type="Gene3D" id="3.30.360.10">
    <property type="entry name" value="Dihydrodipicolinate Reductase, domain 2"/>
    <property type="match status" value="1"/>
</dbReference>
<dbReference type="Gene3D" id="3.40.50.720">
    <property type="entry name" value="NAD(P)-binding Rossmann-like Domain"/>
    <property type="match status" value="1"/>
</dbReference>
<dbReference type="HAMAP" id="MF_02121">
    <property type="entry name" value="ASADH"/>
    <property type="match status" value="1"/>
</dbReference>
<dbReference type="InterPro" id="IPR000319">
    <property type="entry name" value="Asp-semialdehyde_DH_CS"/>
</dbReference>
<dbReference type="InterPro" id="IPR011534">
    <property type="entry name" value="Asp_ADH_gamma-type"/>
</dbReference>
<dbReference type="InterPro" id="IPR012080">
    <property type="entry name" value="Asp_semialdehyde_DH"/>
</dbReference>
<dbReference type="InterPro" id="IPR036291">
    <property type="entry name" value="NAD(P)-bd_dom_sf"/>
</dbReference>
<dbReference type="InterPro" id="IPR000534">
    <property type="entry name" value="Semialdehyde_DH_NAD-bd"/>
</dbReference>
<dbReference type="InterPro" id="IPR012280">
    <property type="entry name" value="Semialdhyde_DH_dimer_dom"/>
</dbReference>
<dbReference type="NCBIfam" id="TIGR01745">
    <property type="entry name" value="asd_gamma"/>
    <property type="match status" value="1"/>
</dbReference>
<dbReference type="NCBIfam" id="NF005144">
    <property type="entry name" value="PRK06598.1"/>
    <property type="match status" value="1"/>
</dbReference>
<dbReference type="PANTHER" id="PTHR46278:SF4">
    <property type="entry name" value="ASPARTATE-SEMIALDEHYDE DEHYDROGENASE"/>
    <property type="match status" value="1"/>
</dbReference>
<dbReference type="PANTHER" id="PTHR46278">
    <property type="entry name" value="DEHYDROGENASE, PUTATIVE-RELATED"/>
    <property type="match status" value="1"/>
</dbReference>
<dbReference type="Pfam" id="PF01118">
    <property type="entry name" value="Semialdhyde_dh"/>
    <property type="match status" value="1"/>
</dbReference>
<dbReference type="Pfam" id="PF02774">
    <property type="entry name" value="Semialdhyde_dhC"/>
    <property type="match status" value="1"/>
</dbReference>
<dbReference type="PIRSF" id="PIRSF000148">
    <property type="entry name" value="ASA_dh"/>
    <property type="match status" value="1"/>
</dbReference>
<dbReference type="SMART" id="SM00859">
    <property type="entry name" value="Semialdhyde_dh"/>
    <property type="match status" value="1"/>
</dbReference>
<dbReference type="SUPFAM" id="SSF55347">
    <property type="entry name" value="Glyceraldehyde-3-phosphate dehydrogenase-like, C-terminal domain"/>
    <property type="match status" value="1"/>
</dbReference>
<dbReference type="SUPFAM" id="SSF51735">
    <property type="entry name" value="NAD(P)-binding Rossmann-fold domains"/>
    <property type="match status" value="1"/>
</dbReference>
<dbReference type="PROSITE" id="PS01103">
    <property type="entry name" value="ASD"/>
    <property type="match status" value="1"/>
</dbReference>
<gene>
    <name evidence="2" type="primary">asd</name>
    <name type="ordered locus">STY4271</name>
    <name type="ordered locus">t3981</name>
</gene>
<protein>
    <recommendedName>
        <fullName evidence="2">Aspartate-semialdehyde dehydrogenase</fullName>
        <shortName evidence="2">ASA dehydrogenase</shortName>
        <shortName evidence="2">ASADH</shortName>
        <ecNumber evidence="2">1.2.1.11</ecNumber>
    </recommendedName>
    <alternativeName>
        <fullName evidence="2">Aspartate-beta-semialdehyde dehydrogenase</fullName>
    </alternativeName>
</protein>
<comment type="function">
    <text evidence="2">Catalyzes the NADPH-dependent formation of L-aspartate-semialdehyde (L-ASA) by the reductive dephosphorylation of L-aspartyl-4-phosphate.</text>
</comment>
<comment type="catalytic activity">
    <reaction evidence="2">
        <text>L-aspartate 4-semialdehyde + phosphate + NADP(+) = 4-phospho-L-aspartate + NADPH + H(+)</text>
        <dbReference type="Rhea" id="RHEA:24284"/>
        <dbReference type="ChEBI" id="CHEBI:15378"/>
        <dbReference type="ChEBI" id="CHEBI:43474"/>
        <dbReference type="ChEBI" id="CHEBI:57535"/>
        <dbReference type="ChEBI" id="CHEBI:57783"/>
        <dbReference type="ChEBI" id="CHEBI:58349"/>
        <dbReference type="ChEBI" id="CHEBI:537519"/>
        <dbReference type="EC" id="1.2.1.11"/>
    </reaction>
</comment>
<comment type="pathway">
    <text evidence="2">Amino-acid biosynthesis; L-lysine biosynthesis via DAP pathway; (S)-tetrahydrodipicolinate from L-aspartate: step 2/4.</text>
</comment>
<comment type="pathway">
    <text evidence="2">Amino-acid biosynthesis; L-methionine biosynthesis via de novo pathway; L-homoserine from L-aspartate: step 2/3.</text>
</comment>
<comment type="pathway">
    <text evidence="2">Amino-acid biosynthesis; L-threonine biosynthesis; L-threonine from L-aspartate: step 2/5.</text>
</comment>
<comment type="subunit">
    <text evidence="2">Homodimer.</text>
</comment>
<comment type="similarity">
    <text evidence="2">Belongs to the aspartate-semialdehyde dehydrogenase family.</text>
</comment>
<proteinExistence type="inferred from homology"/>
<name>DHAS_SALTI</name>
<reference key="1">
    <citation type="journal article" date="2001" name="Nature">
        <title>Complete genome sequence of a multiple drug resistant Salmonella enterica serovar Typhi CT18.</title>
        <authorList>
            <person name="Parkhill J."/>
            <person name="Dougan G."/>
            <person name="James K.D."/>
            <person name="Thomson N.R."/>
            <person name="Pickard D."/>
            <person name="Wain J."/>
            <person name="Churcher C.M."/>
            <person name="Mungall K.L."/>
            <person name="Bentley S.D."/>
            <person name="Holden M.T.G."/>
            <person name="Sebaihia M."/>
            <person name="Baker S."/>
            <person name="Basham D."/>
            <person name="Brooks K."/>
            <person name="Chillingworth T."/>
            <person name="Connerton P."/>
            <person name="Cronin A."/>
            <person name="Davis P."/>
            <person name="Davies R.M."/>
            <person name="Dowd L."/>
            <person name="White N."/>
            <person name="Farrar J."/>
            <person name="Feltwell T."/>
            <person name="Hamlin N."/>
            <person name="Haque A."/>
            <person name="Hien T.T."/>
            <person name="Holroyd S."/>
            <person name="Jagels K."/>
            <person name="Krogh A."/>
            <person name="Larsen T.S."/>
            <person name="Leather S."/>
            <person name="Moule S."/>
            <person name="O'Gaora P."/>
            <person name="Parry C."/>
            <person name="Quail M.A."/>
            <person name="Rutherford K.M."/>
            <person name="Simmonds M."/>
            <person name="Skelton J."/>
            <person name="Stevens K."/>
            <person name="Whitehead S."/>
            <person name="Barrell B.G."/>
        </authorList>
    </citation>
    <scope>NUCLEOTIDE SEQUENCE [LARGE SCALE GENOMIC DNA]</scope>
    <source>
        <strain>CT18</strain>
    </source>
</reference>
<reference key="2">
    <citation type="journal article" date="2003" name="J. Bacteriol.">
        <title>Comparative genomics of Salmonella enterica serovar Typhi strains Ty2 and CT18.</title>
        <authorList>
            <person name="Deng W."/>
            <person name="Liou S.-R."/>
            <person name="Plunkett G. III"/>
            <person name="Mayhew G.F."/>
            <person name="Rose D.J."/>
            <person name="Burland V."/>
            <person name="Kodoyianni V."/>
            <person name="Schwartz D.C."/>
            <person name="Blattner F.R."/>
        </authorList>
    </citation>
    <scope>NUCLEOTIDE SEQUENCE [LARGE SCALE GENOMIC DNA]</scope>
    <source>
        <strain>ATCC 700931 / Ty2</strain>
    </source>
</reference>
<sequence length="368" mass="40136">MKNVGFIGWRGMVGSVLMQRMVEERDFDAIRPVFFSTSQFGQAAPTFGDTSTGTLQDAFDLDALKALDIIVTCQGGDYTNEIYPKLRESGWQGYWIDAASTLRMKDDAIIILDPVNQDVITDGLNNGVKTFVGGNCTVSLMLMSLGGLFAHNLVDWVSVATYQAASGGGARHMRELLTQMGQLYGHVADELATPSSAILDIERKVTALTRSGELPVDNFGVPLAGSLIPWIDKQLDNGQSREEWKGQAETNKILNTASVIPVDGLCVRVGALRCHSQAFTIKLKKEVSIPTVEELLAAHNPWAKVVPNDRDITMRELTPAAVTGTLTTPVGRLRKLNMGPEFLSAFTVGDQLLWGAAEPLRRMLRQLA</sequence>
<organism>
    <name type="scientific">Salmonella typhi</name>
    <dbReference type="NCBI Taxonomy" id="90370"/>
    <lineage>
        <taxon>Bacteria</taxon>
        <taxon>Pseudomonadati</taxon>
        <taxon>Pseudomonadota</taxon>
        <taxon>Gammaproteobacteria</taxon>
        <taxon>Enterobacterales</taxon>
        <taxon>Enterobacteriaceae</taxon>
        <taxon>Salmonella</taxon>
    </lineage>
</organism>
<feature type="chain" id="PRO_0000141372" description="Aspartate-semialdehyde dehydrogenase">
    <location>
        <begin position="1"/>
        <end position="368"/>
    </location>
</feature>
<feature type="active site" description="Acyl-thioester intermediate" evidence="2">
    <location>
        <position position="136"/>
    </location>
</feature>
<feature type="active site" description="Proton acceptor" evidence="2">
    <location>
        <position position="275"/>
    </location>
</feature>
<feature type="binding site" evidence="2">
    <location>
        <begin position="10"/>
        <end position="13"/>
    </location>
    <ligand>
        <name>NADP(+)</name>
        <dbReference type="ChEBI" id="CHEBI:58349"/>
    </ligand>
</feature>
<feature type="binding site" evidence="2">
    <location>
        <begin position="37"/>
        <end position="38"/>
    </location>
    <ligand>
        <name>NADP(+)</name>
        <dbReference type="ChEBI" id="CHEBI:58349"/>
    </ligand>
</feature>
<feature type="binding site" evidence="2">
    <location>
        <position position="74"/>
    </location>
    <ligand>
        <name>NADP(+)</name>
        <dbReference type="ChEBI" id="CHEBI:58349"/>
    </ligand>
</feature>
<feature type="binding site" evidence="2">
    <location>
        <position position="103"/>
    </location>
    <ligand>
        <name>phosphate</name>
        <dbReference type="ChEBI" id="CHEBI:43474"/>
    </ligand>
</feature>
<feature type="binding site" evidence="2">
    <location>
        <position position="163"/>
    </location>
    <ligand>
        <name>substrate</name>
    </ligand>
</feature>
<feature type="binding site" evidence="2">
    <location>
        <begin position="166"/>
        <end position="167"/>
    </location>
    <ligand>
        <name>NADP(+)</name>
        <dbReference type="ChEBI" id="CHEBI:58349"/>
    </ligand>
</feature>
<feature type="binding site" evidence="2">
    <location>
        <position position="194"/>
    </location>
    <ligand>
        <name>NADP(+)</name>
        <dbReference type="ChEBI" id="CHEBI:58349"/>
    </ligand>
</feature>
<feature type="binding site" evidence="2">
    <location>
        <position position="242"/>
    </location>
    <ligand>
        <name>substrate</name>
    </ligand>
</feature>
<feature type="binding site" evidence="2">
    <location>
        <position position="245"/>
    </location>
    <ligand>
        <name>phosphate</name>
        <dbReference type="ChEBI" id="CHEBI:43474"/>
    </ligand>
</feature>
<feature type="binding site" evidence="2">
    <location>
        <position position="268"/>
    </location>
    <ligand>
        <name>substrate</name>
    </ligand>
</feature>
<feature type="binding site" evidence="2">
    <location>
        <position position="351"/>
    </location>
    <ligand>
        <name>NADP(+)</name>
        <dbReference type="ChEBI" id="CHEBI:58349"/>
    </ligand>
</feature>
<feature type="modified residue" description="S-cysteinyl cysteine; in inhibited form" evidence="1">
    <location>
        <position position="136"/>
    </location>
</feature>
<accession>P0A1F9</accession>
<accession>O30706</accession>